<dbReference type="EC" id="1.11.1.21" evidence="1"/>
<dbReference type="EMBL" id="AM233362">
    <property type="protein sequence ID" value="CAJ79943.1"/>
    <property type="status" value="ALT_INIT"/>
    <property type="molecule type" value="Genomic_DNA"/>
</dbReference>
<dbReference type="RefSeq" id="WP_003016823.1">
    <property type="nucleotide sequence ID" value="NZ_CP009694.1"/>
</dbReference>
<dbReference type="SMR" id="Q2A298"/>
<dbReference type="PeroxiBase" id="3651">
    <property type="entry name" value="FthCP01_LVS"/>
</dbReference>
<dbReference type="KEGG" id="ftl:FTL_1504"/>
<dbReference type="Proteomes" id="UP000001944">
    <property type="component" value="Chromosome"/>
</dbReference>
<dbReference type="GO" id="GO:0005829">
    <property type="term" value="C:cytosol"/>
    <property type="evidence" value="ECO:0007669"/>
    <property type="project" value="TreeGrafter"/>
</dbReference>
<dbReference type="GO" id="GO:0004096">
    <property type="term" value="F:catalase activity"/>
    <property type="evidence" value="ECO:0007669"/>
    <property type="project" value="UniProtKB-UniRule"/>
</dbReference>
<dbReference type="GO" id="GO:0020037">
    <property type="term" value="F:heme binding"/>
    <property type="evidence" value="ECO:0007669"/>
    <property type="project" value="InterPro"/>
</dbReference>
<dbReference type="GO" id="GO:0046872">
    <property type="term" value="F:metal ion binding"/>
    <property type="evidence" value="ECO:0007669"/>
    <property type="project" value="UniProtKB-KW"/>
</dbReference>
<dbReference type="GO" id="GO:0070301">
    <property type="term" value="P:cellular response to hydrogen peroxide"/>
    <property type="evidence" value="ECO:0007669"/>
    <property type="project" value="TreeGrafter"/>
</dbReference>
<dbReference type="GO" id="GO:0042744">
    <property type="term" value="P:hydrogen peroxide catabolic process"/>
    <property type="evidence" value="ECO:0007669"/>
    <property type="project" value="UniProtKB-KW"/>
</dbReference>
<dbReference type="CDD" id="cd00649">
    <property type="entry name" value="catalase_peroxidase_1"/>
    <property type="match status" value="1"/>
</dbReference>
<dbReference type="CDD" id="cd08200">
    <property type="entry name" value="catalase_peroxidase_2"/>
    <property type="match status" value="1"/>
</dbReference>
<dbReference type="Gene3D" id="1.10.520.10">
    <property type="match status" value="2"/>
</dbReference>
<dbReference type="Gene3D" id="1.10.420.10">
    <property type="entry name" value="Peroxidase, domain 2"/>
    <property type="match status" value="2"/>
</dbReference>
<dbReference type="HAMAP" id="MF_01961">
    <property type="entry name" value="Catal_peroxid"/>
    <property type="match status" value="1"/>
</dbReference>
<dbReference type="InterPro" id="IPR000763">
    <property type="entry name" value="Catalase_peroxidase"/>
</dbReference>
<dbReference type="InterPro" id="IPR002016">
    <property type="entry name" value="Haem_peroxidase"/>
</dbReference>
<dbReference type="InterPro" id="IPR010255">
    <property type="entry name" value="Haem_peroxidase_sf"/>
</dbReference>
<dbReference type="InterPro" id="IPR019794">
    <property type="entry name" value="Peroxidases_AS"/>
</dbReference>
<dbReference type="InterPro" id="IPR019793">
    <property type="entry name" value="Peroxidases_heam-ligand_BS"/>
</dbReference>
<dbReference type="NCBIfam" id="TIGR00198">
    <property type="entry name" value="cat_per_HPI"/>
    <property type="match status" value="1"/>
</dbReference>
<dbReference type="NCBIfam" id="NF011635">
    <property type="entry name" value="PRK15061.1"/>
    <property type="match status" value="1"/>
</dbReference>
<dbReference type="PANTHER" id="PTHR30555:SF0">
    <property type="entry name" value="CATALASE-PEROXIDASE"/>
    <property type="match status" value="1"/>
</dbReference>
<dbReference type="PANTHER" id="PTHR30555">
    <property type="entry name" value="HYDROPEROXIDASE I, BIFUNCTIONAL CATALASE-PEROXIDASE"/>
    <property type="match status" value="1"/>
</dbReference>
<dbReference type="Pfam" id="PF00141">
    <property type="entry name" value="peroxidase"/>
    <property type="match status" value="2"/>
</dbReference>
<dbReference type="PRINTS" id="PR00460">
    <property type="entry name" value="BPEROXIDASE"/>
</dbReference>
<dbReference type="PRINTS" id="PR00458">
    <property type="entry name" value="PEROXIDASE"/>
</dbReference>
<dbReference type="SUPFAM" id="SSF48113">
    <property type="entry name" value="Heme-dependent peroxidases"/>
    <property type="match status" value="2"/>
</dbReference>
<dbReference type="PROSITE" id="PS00435">
    <property type="entry name" value="PEROXIDASE_1"/>
    <property type="match status" value="1"/>
</dbReference>
<dbReference type="PROSITE" id="PS00436">
    <property type="entry name" value="PEROXIDASE_2"/>
    <property type="match status" value="1"/>
</dbReference>
<dbReference type="PROSITE" id="PS50873">
    <property type="entry name" value="PEROXIDASE_4"/>
    <property type="match status" value="1"/>
</dbReference>
<accession>Q2A298</accession>
<name>KATG_FRATH</name>
<organism>
    <name type="scientific">Francisella tularensis subsp. holarctica (strain LVS)</name>
    <dbReference type="NCBI Taxonomy" id="376619"/>
    <lineage>
        <taxon>Bacteria</taxon>
        <taxon>Pseudomonadati</taxon>
        <taxon>Pseudomonadota</taxon>
        <taxon>Gammaproteobacteria</taxon>
        <taxon>Thiotrichales</taxon>
        <taxon>Francisellaceae</taxon>
        <taxon>Francisella</taxon>
    </lineage>
</organism>
<gene>
    <name evidence="1" type="primary">katG</name>
    <name type="ordered locus">FTL_1504</name>
</gene>
<proteinExistence type="inferred from homology"/>
<evidence type="ECO:0000255" key="1">
    <source>
        <dbReference type="HAMAP-Rule" id="MF_01961"/>
    </source>
</evidence>
<evidence type="ECO:0000305" key="2"/>
<keyword id="KW-0349">Heme</keyword>
<keyword id="KW-0376">Hydrogen peroxide</keyword>
<keyword id="KW-0408">Iron</keyword>
<keyword id="KW-0479">Metal-binding</keyword>
<keyword id="KW-0560">Oxidoreductase</keyword>
<keyword id="KW-0575">Peroxidase</keyword>
<keyword id="KW-1185">Reference proteome</keyword>
<keyword id="KW-0732">Signal</keyword>
<feature type="signal peptide" evidence="1">
    <location>
        <begin position="1"/>
        <end position="23"/>
    </location>
</feature>
<feature type="chain" id="PRO_0000354790" description="Catalase-peroxidase">
    <location>
        <begin position="24"/>
        <end position="741"/>
    </location>
</feature>
<feature type="active site" description="Proton acceptor" evidence="1">
    <location>
        <position position="103"/>
    </location>
</feature>
<feature type="binding site" description="axial binding residue" evidence="1">
    <location>
        <position position="264"/>
    </location>
    <ligand>
        <name>heme b</name>
        <dbReference type="ChEBI" id="CHEBI:60344"/>
    </ligand>
    <ligandPart>
        <name>Fe</name>
        <dbReference type="ChEBI" id="CHEBI:18248"/>
    </ligandPart>
</feature>
<feature type="site" description="Transition state stabilizer" evidence="1">
    <location>
        <position position="99"/>
    </location>
</feature>
<feature type="cross-link" description="Tryptophyl-tyrosyl-methioninium (Trp-Tyr) (with M-249)" evidence="1">
    <location>
        <begin position="102"/>
        <end position="223"/>
    </location>
</feature>
<feature type="cross-link" description="Tryptophyl-tyrosyl-methioninium (Tyr-Met) (with W-102)" evidence="1">
    <location>
        <begin position="223"/>
        <end position="249"/>
    </location>
</feature>
<comment type="function">
    <text evidence="1">Bifunctional enzyme with both catalase and broad-spectrum peroxidase activity.</text>
</comment>
<comment type="catalytic activity">
    <reaction evidence="1">
        <text>H2O2 + AH2 = A + 2 H2O</text>
        <dbReference type="Rhea" id="RHEA:30275"/>
        <dbReference type="ChEBI" id="CHEBI:13193"/>
        <dbReference type="ChEBI" id="CHEBI:15377"/>
        <dbReference type="ChEBI" id="CHEBI:16240"/>
        <dbReference type="ChEBI" id="CHEBI:17499"/>
        <dbReference type="EC" id="1.11.1.21"/>
    </reaction>
</comment>
<comment type="catalytic activity">
    <reaction evidence="1">
        <text>2 H2O2 = O2 + 2 H2O</text>
        <dbReference type="Rhea" id="RHEA:20309"/>
        <dbReference type="ChEBI" id="CHEBI:15377"/>
        <dbReference type="ChEBI" id="CHEBI:15379"/>
        <dbReference type="ChEBI" id="CHEBI:16240"/>
        <dbReference type="EC" id="1.11.1.21"/>
    </reaction>
</comment>
<comment type="cofactor">
    <cofactor evidence="1">
        <name>heme b</name>
        <dbReference type="ChEBI" id="CHEBI:60344"/>
    </cofactor>
    <text evidence="1">Binds 1 heme b (iron(II)-protoporphyrin IX) group per dimer.</text>
</comment>
<comment type="subunit">
    <text evidence="1">Homodimer or homotetramer.</text>
</comment>
<comment type="PTM">
    <text evidence="1">Formation of the three residue Trp-Tyr-Met cross-link is important for the catalase, but not the peroxidase activity of the enzyme.</text>
</comment>
<comment type="similarity">
    <text evidence="1">Belongs to the peroxidase family. Peroxidase/catalase subfamily.</text>
</comment>
<comment type="sequence caution" evidence="2">
    <conflict type="erroneous initiation">
        <sequence resource="EMBL-CDS" id="CAJ79943"/>
    </conflict>
</comment>
<protein>
    <recommendedName>
        <fullName evidence="1">Catalase-peroxidase</fullName>
        <shortName evidence="1">CP</shortName>
        <ecNumber evidence="1">1.11.1.21</ecNumber>
    </recommendedName>
    <alternativeName>
        <fullName evidence="1">Peroxidase/catalase</fullName>
    </alternativeName>
</protein>
<sequence length="741" mass="82572">MLKKIITALGMSGMLLASSNAIAEDTKTKNDNLSPQSVDLSPLRNLNKLDSPMDKDYNYHQAFKKLDTEQLKKDMQDLLTQSQDWWPADFGNYGPFFIRLSWHDAGTYRIYDGRGGANRGQQRFSPLNSWPDNVNLDKARQLLWPIKQKYGDAVSWSDLIVLAGTVSLESMGMKPIGFAFGREDDWQGDDTNWGLSPEEIMSSNVRDGKLAPAYAATQMGLIYVNPEGPDGKPDIKGAASEIRQAFRAMGMTDKETVALIAGGHTFGKTHGAVPEDKVKQAIGPAPDKAPIEQQGLGWHNSYGTGNGDDTMGSGLEGSWTSTPTFWNHDFLHNLYNLDWKKTLSPAGAHQWTPTNAKPENMVPDAHKLGVKHKPIMFTTDLALKEDDGFNKYTQEFYNNPEEFKEEFAKAWFKLTHRDMGPKSRYIGPWIPEQNFIWQDPVPAADYKQVSTQDIAQLEQDIINSGLTNQQLIKTAWDSASTYRKTDYRGGSNGARIALAPEKDWQMNEPAKLEVVLTKLKEIQTNFNNSKTDGTKVSLADLIVLGGNVGVEQAAKQAGYNIQMPFVPGRTDATQAQTDIESFNYLKTKSDGFINYTDGSISADKLPQTLVEKASMLDLNIPEMTVLVGGMRALDVNYDNSQEGVLTTTPGQLNNSFFVNLLDMSTQWKKSDKKDGEYIGIDRKTGKQKWTASPVDLIFGSNSELKAVAQVYAENGNEQKFVNDFAKAWHKVMMLGRFDVQQ</sequence>
<reference key="1">
    <citation type="submission" date="2006-03" db="EMBL/GenBank/DDBJ databases">
        <title>Complete genome sequence of Francisella tularensis LVS (Live Vaccine Strain).</title>
        <authorList>
            <person name="Chain P."/>
            <person name="Larimer F."/>
            <person name="Land M."/>
            <person name="Stilwagen S."/>
            <person name="Larsson P."/>
            <person name="Bearden S."/>
            <person name="Chu M."/>
            <person name="Oyston P."/>
            <person name="Forsman M."/>
            <person name="Andersson S."/>
            <person name="Lindler L."/>
            <person name="Titball R."/>
            <person name="Garcia E."/>
        </authorList>
    </citation>
    <scope>NUCLEOTIDE SEQUENCE [LARGE SCALE GENOMIC DNA]</scope>
    <source>
        <strain>LVS</strain>
    </source>
</reference>